<feature type="chain" id="PRO_0000276685" description="Small ribosomal subunit protein uS14c">
    <location>
        <begin position="1"/>
        <end position="100"/>
    </location>
</feature>
<name>RR14_MORIN</name>
<sequence>MARKSLIQREKKRQKLEQKYHLIRRSSKKEISKVPSLNEKWKIHGKLQSLPRNSAPIRLHRRCFSTGRPRANYRDFGLSGHILREMVQACLLPGATRSSW</sequence>
<protein>
    <recommendedName>
        <fullName evidence="1">Small ribosomal subunit protein uS14c</fullName>
    </recommendedName>
    <alternativeName>
        <fullName evidence="2">30S ribosomal protein S14, chloroplastic</fullName>
    </alternativeName>
</protein>
<proteinExistence type="inferred from homology"/>
<organism>
    <name type="scientific">Morus indica</name>
    <name type="common">Mulberry</name>
    <dbReference type="NCBI Taxonomy" id="248361"/>
    <lineage>
        <taxon>Eukaryota</taxon>
        <taxon>Viridiplantae</taxon>
        <taxon>Streptophyta</taxon>
        <taxon>Embryophyta</taxon>
        <taxon>Tracheophyta</taxon>
        <taxon>Spermatophyta</taxon>
        <taxon>Magnoliopsida</taxon>
        <taxon>eudicotyledons</taxon>
        <taxon>Gunneridae</taxon>
        <taxon>Pentapetalae</taxon>
        <taxon>rosids</taxon>
        <taxon>fabids</taxon>
        <taxon>Rosales</taxon>
        <taxon>Moraceae</taxon>
        <taxon>Moreae</taxon>
        <taxon>Morus</taxon>
    </lineage>
</organism>
<accession>Q09X19</accession>
<comment type="function">
    <text evidence="1">Binds 16S rRNA, required for the assembly of 30S particles.</text>
</comment>
<comment type="subunit">
    <text evidence="1">Part of the 30S ribosomal subunit.</text>
</comment>
<comment type="subcellular location">
    <subcellularLocation>
        <location>Plastid</location>
        <location>Chloroplast</location>
    </subcellularLocation>
</comment>
<comment type="similarity">
    <text evidence="1">Belongs to the universal ribosomal protein uS14 family.</text>
</comment>
<dbReference type="EMBL" id="DQ226511">
    <property type="protein sequence ID" value="ABB20956.1"/>
    <property type="molecule type" value="Genomic_DNA"/>
</dbReference>
<dbReference type="RefSeq" id="YP_762259.1">
    <property type="nucleotide sequence ID" value="NC_008359.1"/>
</dbReference>
<dbReference type="SMR" id="Q09X19"/>
<dbReference type="GeneID" id="4290567"/>
<dbReference type="GO" id="GO:0009507">
    <property type="term" value="C:chloroplast"/>
    <property type="evidence" value="ECO:0007669"/>
    <property type="project" value="UniProtKB-SubCell"/>
</dbReference>
<dbReference type="GO" id="GO:0015935">
    <property type="term" value="C:small ribosomal subunit"/>
    <property type="evidence" value="ECO:0007669"/>
    <property type="project" value="TreeGrafter"/>
</dbReference>
<dbReference type="GO" id="GO:0019843">
    <property type="term" value="F:rRNA binding"/>
    <property type="evidence" value="ECO:0007669"/>
    <property type="project" value="UniProtKB-UniRule"/>
</dbReference>
<dbReference type="GO" id="GO:0003735">
    <property type="term" value="F:structural constituent of ribosome"/>
    <property type="evidence" value="ECO:0007669"/>
    <property type="project" value="InterPro"/>
</dbReference>
<dbReference type="GO" id="GO:0006412">
    <property type="term" value="P:translation"/>
    <property type="evidence" value="ECO:0007669"/>
    <property type="project" value="UniProtKB-UniRule"/>
</dbReference>
<dbReference type="FunFam" id="1.10.287.1480:FF:000001">
    <property type="entry name" value="30S ribosomal protein S14"/>
    <property type="match status" value="1"/>
</dbReference>
<dbReference type="Gene3D" id="1.10.287.1480">
    <property type="match status" value="1"/>
</dbReference>
<dbReference type="HAMAP" id="MF_00537">
    <property type="entry name" value="Ribosomal_uS14_1"/>
    <property type="match status" value="1"/>
</dbReference>
<dbReference type="InterPro" id="IPR001209">
    <property type="entry name" value="Ribosomal_uS14"/>
</dbReference>
<dbReference type="InterPro" id="IPR023036">
    <property type="entry name" value="Ribosomal_uS14_bac/plastid"/>
</dbReference>
<dbReference type="InterPro" id="IPR018271">
    <property type="entry name" value="Ribosomal_uS14_CS"/>
</dbReference>
<dbReference type="NCBIfam" id="NF006477">
    <property type="entry name" value="PRK08881.1"/>
    <property type="match status" value="1"/>
</dbReference>
<dbReference type="PANTHER" id="PTHR19836">
    <property type="entry name" value="30S RIBOSOMAL PROTEIN S14"/>
    <property type="match status" value="1"/>
</dbReference>
<dbReference type="PANTHER" id="PTHR19836:SF19">
    <property type="entry name" value="SMALL RIBOSOMAL SUBUNIT PROTEIN US14M"/>
    <property type="match status" value="1"/>
</dbReference>
<dbReference type="Pfam" id="PF00253">
    <property type="entry name" value="Ribosomal_S14"/>
    <property type="match status" value="1"/>
</dbReference>
<dbReference type="SUPFAM" id="SSF57716">
    <property type="entry name" value="Glucocorticoid receptor-like (DNA-binding domain)"/>
    <property type="match status" value="1"/>
</dbReference>
<dbReference type="PROSITE" id="PS00527">
    <property type="entry name" value="RIBOSOMAL_S14"/>
    <property type="match status" value="1"/>
</dbReference>
<geneLocation type="chloroplast"/>
<reference key="1">
    <citation type="submission" date="2005-09" db="EMBL/GenBank/DDBJ databases">
        <title>The chloroplast genome of mulberry: structural features and comparative analysis.</title>
        <authorList>
            <person name="Ravi V."/>
            <person name="Khurana J.P."/>
            <person name="Tyagi A.K."/>
            <person name="Khurana P."/>
        </authorList>
    </citation>
    <scope>NUCLEOTIDE SEQUENCE [LARGE SCALE GENOMIC DNA]</scope>
    <source>
        <strain>cv. K2</strain>
    </source>
</reference>
<gene>
    <name evidence="1" type="primary">rps14</name>
    <name type="ordered locus">MoinCp019</name>
</gene>
<evidence type="ECO:0000255" key="1">
    <source>
        <dbReference type="HAMAP-Rule" id="MF_00537"/>
    </source>
</evidence>
<evidence type="ECO:0000305" key="2"/>
<keyword id="KW-0150">Chloroplast</keyword>
<keyword id="KW-0934">Plastid</keyword>
<keyword id="KW-0687">Ribonucleoprotein</keyword>
<keyword id="KW-0689">Ribosomal protein</keyword>
<keyword id="KW-0694">RNA-binding</keyword>
<keyword id="KW-0699">rRNA-binding</keyword>